<name>SPEH_SULAC</name>
<organism>
    <name type="scientific">Sulfolobus acidocaldarius (strain ATCC 33909 / DSM 639 / JCM 8929 / NBRC 15157 / NCIMB 11770)</name>
    <dbReference type="NCBI Taxonomy" id="330779"/>
    <lineage>
        <taxon>Archaea</taxon>
        <taxon>Thermoproteota</taxon>
        <taxon>Thermoprotei</taxon>
        <taxon>Sulfolobales</taxon>
        <taxon>Sulfolobaceae</taxon>
        <taxon>Sulfolobus</taxon>
    </lineage>
</organism>
<proteinExistence type="inferred from homology"/>
<sequence>MMGVVSLPRVIGKQVYGSLYECDTTVLGEQKVLEQIVRKAAEEGNMTLLDVKAWKIGDGVSIVAIVLESHITIHTWPEYNFATVDVYSCGSHTDPRKAFLYIVKELKARRYTMNEADRSSEF</sequence>
<accession>Q4J8J9</accession>
<evidence type="ECO:0000255" key="1">
    <source>
        <dbReference type="HAMAP-Rule" id="MF_00464"/>
    </source>
</evidence>
<comment type="function">
    <text evidence="1">Catalyzes the decarboxylation of S-adenosylmethionine to S-adenosylmethioninamine (dcAdoMet), the propylamine donor required for the synthesis of the polyamines spermine and spermidine from the diamine putrescine.</text>
</comment>
<comment type="catalytic activity">
    <reaction evidence="1">
        <text>S-adenosyl-L-methionine + H(+) = S-adenosyl 3-(methylsulfanyl)propylamine + CO2</text>
        <dbReference type="Rhea" id="RHEA:15981"/>
        <dbReference type="ChEBI" id="CHEBI:15378"/>
        <dbReference type="ChEBI" id="CHEBI:16526"/>
        <dbReference type="ChEBI" id="CHEBI:57443"/>
        <dbReference type="ChEBI" id="CHEBI:59789"/>
        <dbReference type="EC" id="4.1.1.50"/>
    </reaction>
</comment>
<comment type="cofactor">
    <cofactor evidence="1">
        <name>pyruvate</name>
        <dbReference type="ChEBI" id="CHEBI:15361"/>
    </cofactor>
    <text evidence="1">Binds 1 pyruvoyl group covalently per subunit.</text>
</comment>
<comment type="pathway">
    <text evidence="1">Amine and polyamine biosynthesis; S-adenosylmethioninamine biosynthesis; S-adenosylmethioninamine from S-adenosyl-L-methionine: step 1/1.</text>
</comment>
<comment type="subunit">
    <text evidence="1">Heterotetramer of two alpha and two beta chains arranged as a dimer of alpha/beta heterodimers.</text>
</comment>
<comment type="PTM">
    <text evidence="1">Is synthesized initially as an inactive proenzyme. Formation of the active enzyme involves a self-maturation process in which the active site pyruvoyl group is generated from an internal serine residue via an autocatalytic post-translational modification. Two non-identical subunits are generated from the proenzyme in this reaction, and the pyruvate is formed at the N-terminus of the alpha chain, which is derived from the carboxyl end of the proenzyme. The post-translation cleavage follows an unusual pathway, termed non-hydrolytic serinolysis, in which the side chain hydroxyl group of the serine supplies its oxygen atom to form the C-terminus of the beta chain, while the remainder of the serine residue undergoes an oxidative deamination to produce ammonia and the pyruvoyl group blocking the N-terminus of the alpha chain.</text>
</comment>
<comment type="similarity">
    <text evidence="1">Belongs to the prokaryotic AdoMetDC family. Type 1 subfamily.</text>
</comment>
<feature type="chain" id="PRO_0000041968" description="S-adenosylmethionine decarboxylase beta chain" evidence="1">
    <location>
        <begin position="1"/>
        <end position="68"/>
    </location>
</feature>
<feature type="chain" id="PRO_0000041969" description="S-adenosylmethionine decarboxylase alpha chain" evidence="1">
    <location>
        <begin position="69"/>
        <end position="122"/>
    </location>
</feature>
<feature type="active site" description="Schiff-base intermediate with substrate; via pyruvic acid" evidence="1">
    <location>
        <position position="69"/>
    </location>
</feature>
<feature type="active site" description="Proton acceptor; for processing activity" evidence="1">
    <location>
        <position position="74"/>
    </location>
</feature>
<feature type="active site" description="Proton donor; for catalytic activity" evidence="1">
    <location>
        <position position="89"/>
    </location>
</feature>
<feature type="site" description="Cleavage (non-hydrolytic); by autolysis" evidence="1">
    <location>
        <begin position="68"/>
        <end position="69"/>
    </location>
</feature>
<feature type="modified residue" description="Pyruvic acid (Ser); by autocatalysis" evidence="1">
    <location>
        <position position="69"/>
    </location>
</feature>
<dbReference type="EC" id="4.1.1.50" evidence="1"/>
<dbReference type="EMBL" id="CP000077">
    <property type="protein sequence ID" value="AAY80881.1"/>
    <property type="molecule type" value="Genomic_DNA"/>
</dbReference>
<dbReference type="RefSeq" id="WP_011278383.1">
    <property type="nucleotide sequence ID" value="NC_007181.1"/>
</dbReference>
<dbReference type="SMR" id="Q4J8J9"/>
<dbReference type="STRING" id="330779.Saci_1568"/>
<dbReference type="GeneID" id="14552061"/>
<dbReference type="KEGG" id="sai:Saci_1568"/>
<dbReference type="PATRIC" id="fig|330779.12.peg.1508"/>
<dbReference type="eggNOG" id="arCOG00279">
    <property type="taxonomic scope" value="Archaea"/>
</dbReference>
<dbReference type="HOGENOM" id="CLU_125470_2_1_2"/>
<dbReference type="UniPathway" id="UPA00331">
    <property type="reaction ID" value="UER00451"/>
</dbReference>
<dbReference type="Proteomes" id="UP000001018">
    <property type="component" value="Chromosome"/>
</dbReference>
<dbReference type="GO" id="GO:0005829">
    <property type="term" value="C:cytosol"/>
    <property type="evidence" value="ECO:0007669"/>
    <property type="project" value="TreeGrafter"/>
</dbReference>
<dbReference type="GO" id="GO:0004014">
    <property type="term" value="F:adenosylmethionine decarboxylase activity"/>
    <property type="evidence" value="ECO:0007669"/>
    <property type="project" value="UniProtKB-UniRule"/>
</dbReference>
<dbReference type="GO" id="GO:0008295">
    <property type="term" value="P:spermidine biosynthetic process"/>
    <property type="evidence" value="ECO:0007669"/>
    <property type="project" value="UniProtKB-UniRule"/>
</dbReference>
<dbReference type="Gene3D" id="3.60.90.10">
    <property type="entry name" value="S-adenosylmethionine decarboxylase"/>
    <property type="match status" value="1"/>
</dbReference>
<dbReference type="HAMAP" id="MF_00464">
    <property type="entry name" value="AdoMetDC_1"/>
    <property type="match status" value="1"/>
</dbReference>
<dbReference type="InterPro" id="IPR003826">
    <property type="entry name" value="AdoMetDC_fam_prok"/>
</dbReference>
<dbReference type="InterPro" id="IPR016067">
    <property type="entry name" value="S-AdoMet_deCO2ase_core"/>
</dbReference>
<dbReference type="InterPro" id="IPR017716">
    <property type="entry name" value="S-AdoMet_deCOase_pro-enz"/>
</dbReference>
<dbReference type="NCBIfam" id="TIGR03330">
    <property type="entry name" value="SAM_DCase_Bsu"/>
    <property type="match status" value="1"/>
</dbReference>
<dbReference type="PANTHER" id="PTHR33866">
    <property type="entry name" value="S-ADENOSYLMETHIONINE DECARBOXYLASE PROENZYME"/>
    <property type="match status" value="1"/>
</dbReference>
<dbReference type="PANTHER" id="PTHR33866:SF2">
    <property type="entry name" value="S-ADENOSYLMETHIONINE DECARBOXYLASE PROENZYME"/>
    <property type="match status" value="1"/>
</dbReference>
<dbReference type="Pfam" id="PF02675">
    <property type="entry name" value="AdoMet_dc"/>
    <property type="match status" value="1"/>
</dbReference>
<dbReference type="SUPFAM" id="SSF56276">
    <property type="entry name" value="S-adenosylmethionine decarboxylase"/>
    <property type="match status" value="1"/>
</dbReference>
<protein>
    <recommendedName>
        <fullName evidence="1">S-adenosylmethionine decarboxylase proenzyme</fullName>
        <shortName evidence="1">AdoMetDC</shortName>
        <shortName evidence="1">SAMDC</shortName>
        <ecNumber evidence="1">4.1.1.50</ecNumber>
    </recommendedName>
    <component>
        <recommendedName>
            <fullName evidence="1">S-adenosylmethionine decarboxylase beta chain</fullName>
        </recommendedName>
    </component>
    <component>
        <recommendedName>
            <fullName evidence="1">S-adenosylmethionine decarboxylase alpha chain</fullName>
        </recommendedName>
    </component>
</protein>
<gene>
    <name evidence="1" type="primary">speH</name>
    <name type="ordered locus">Saci_1568</name>
</gene>
<keyword id="KW-0068">Autocatalytic cleavage</keyword>
<keyword id="KW-0210">Decarboxylase</keyword>
<keyword id="KW-0456">Lyase</keyword>
<keyword id="KW-0620">Polyamine biosynthesis</keyword>
<keyword id="KW-0670">Pyruvate</keyword>
<keyword id="KW-1185">Reference proteome</keyword>
<keyword id="KW-0949">S-adenosyl-L-methionine</keyword>
<keyword id="KW-0704">Schiff base</keyword>
<keyword id="KW-0745">Spermidine biosynthesis</keyword>
<keyword id="KW-0865">Zymogen</keyword>
<reference key="1">
    <citation type="journal article" date="2005" name="J. Bacteriol.">
        <title>The genome of Sulfolobus acidocaldarius, a model organism of the Crenarchaeota.</title>
        <authorList>
            <person name="Chen L."/>
            <person name="Bruegger K."/>
            <person name="Skovgaard M."/>
            <person name="Redder P."/>
            <person name="She Q."/>
            <person name="Torarinsson E."/>
            <person name="Greve B."/>
            <person name="Awayez M."/>
            <person name="Zibat A."/>
            <person name="Klenk H.-P."/>
            <person name="Garrett R.A."/>
        </authorList>
    </citation>
    <scope>NUCLEOTIDE SEQUENCE [LARGE SCALE GENOMIC DNA]</scope>
    <source>
        <strain>ATCC 33909 / DSM 639 / JCM 8929 / NBRC 15157 / NCIMB 11770</strain>
    </source>
</reference>